<proteinExistence type="inferred from homology"/>
<sequence>MTPESPTLAALTKLSSAEEIFAFLGVEPIREVLNSSRLHIMKRFGAYLRETDMTGLTEDGIFERARDALLRAQADFVASTPLKEKVFKVFETEAAKRKARFVGLETLKVIKS</sequence>
<comment type="function">
    <text evidence="1">May protect the nitrogenase Fe-Mo protein from oxidative damage.</text>
</comment>
<comment type="subunit">
    <text evidence="1">Homotrimer; associates with NifD.</text>
</comment>
<comment type="similarity">
    <text evidence="2">Belongs to the NifW family.</text>
</comment>
<evidence type="ECO:0000250" key="1"/>
<evidence type="ECO:0000305" key="2"/>
<reference key="1">
    <citation type="journal article" date="1993" name="Mol. Gen. Genet.">
        <title>Nucleotide sequence and genetic analysis of the Rhodobacter capsulatus ORF6-nifUI SVW gene region: possible role of NifW in homocitrate processing.</title>
        <authorList>
            <person name="Masepohl B."/>
            <person name="Angermueller S."/>
            <person name="Hennecke S."/>
            <person name="Huebner P."/>
            <person name="Moreno-Vivian C."/>
            <person name="Klipp W."/>
        </authorList>
    </citation>
    <scope>NUCLEOTIDE SEQUENCE [GENOMIC DNA]</scope>
    <source>
        <strain>ATCC 33303 / B10</strain>
    </source>
</reference>
<gene>
    <name type="primary">nifW</name>
</gene>
<organism>
    <name type="scientific">Rhodobacter capsulatus</name>
    <name type="common">Rhodopseudomonas capsulata</name>
    <dbReference type="NCBI Taxonomy" id="1061"/>
    <lineage>
        <taxon>Bacteria</taxon>
        <taxon>Pseudomonadati</taxon>
        <taxon>Pseudomonadota</taxon>
        <taxon>Alphaproteobacteria</taxon>
        <taxon>Rhodobacterales</taxon>
        <taxon>Rhodobacter group</taxon>
        <taxon>Rhodobacter</taxon>
    </lineage>
</organism>
<protein>
    <recommendedName>
        <fullName>Nitrogenase-stabilizing/protective protein NifW</fullName>
    </recommendedName>
</protein>
<dbReference type="EMBL" id="X68444">
    <property type="protein sequence ID" value="CAA48489.1"/>
    <property type="molecule type" value="Genomic_DNA"/>
</dbReference>
<dbReference type="PIR" id="S34818">
    <property type="entry name" value="S34818"/>
</dbReference>
<dbReference type="RefSeq" id="WP_013068964.1">
    <property type="nucleotide sequence ID" value="NZ_JAOTPJ010000071.1"/>
</dbReference>
<dbReference type="GeneID" id="31492049"/>
<dbReference type="OMA" id="MKRMGQY"/>
<dbReference type="GO" id="GO:0009399">
    <property type="term" value="P:nitrogen fixation"/>
    <property type="evidence" value="ECO:0007669"/>
    <property type="project" value="UniProtKB-UniRule"/>
</dbReference>
<dbReference type="HAMAP" id="MF_00529">
    <property type="entry name" value="NifW"/>
    <property type="match status" value="1"/>
</dbReference>
<dbReference type="InterPro" id="IPR004893">
    <property type="entry name" value="NifW"/>
</dbReference>
<dbReference type="NCBIfam" id="NF002009">
    <property type="entry name" value="PRK00810.1"/>
    <property type="match status" value="1"/>
</dbReference>
<dbReference type="Pfam" id="PF03206">
    <property type="entry name" value="NifW"/>
    <property type="match status" value="1"/>
</dbReference>
<dbReference type="PIRSF" id="PIRSF005790">
    <property type="entry name" value="NifW"/>
    <property type="match status" value="1"/>
</dbReference>
<feature type="chain" id="PRO_0000219539" description="Nitrogenase-stabilizing/protective protein NifW">
    <location>
        <begin position="1"/>
        <end position="112"/>
    </location>
</feature>
<accession>Q07180</accession>
<name>NIFW_RHOCA</name>
<keyword id="KW-0535">Nitrogen fixation</keyword>